<sequence length="405" mass="43232">MSDITVANYHAFPDARGHFGRYGGRFVAETLIGPLQELAQAYDAARHDPDFIAAYNKDLKDYVGRPSPIYHAERLSRKVGGAQILLKREDLNHTGAHKINNTIGQALLAARMGKTRIIAETGAGQHGVASATVAARLGLECVVYMGATDIERQQINVYRMKLLGATVVPVTSGSATLKDALNEAMRDWVTHVGHTFYIIGTVAGPDPYPRMVRDFNAIVGREARAQMIEDYGRLPDAMTACVGGGSNAIGLFHAFLNDASVRIYGAEAAGDGIATGRHAASIVAGRPGVLHGNRTYVICDDDGQILETHSVSAGLDYPGVGPEHAFLADSGRVQYVGIRDEEALAAFHLLAHTEGILAALESSHAVAHAMTLARDLPKDALVLCNLSGRGDKDVHTIAAREGVRV</sequence>
<name>TRPB_XYLFM</name>
<keyword id="KW-0028">Amino-acid biosynthesis</keyword>
<keyword id="KW-0057">Aromatic amino acid biosynthesis</keyword>
<keyword id="KW-0456">Lyase</keyword>
<keyword id="KW-0663">Pyridoxal phosphate</keyword>
<keyword id="KW-0822">Tryptophan biosynthesis</keyword>
<organism>
    <name type="scientific">Xylella fastidiosa (strain M12)</name>
    <dbReference type="NCBI Taxonomy" id="405440"/>
    <lineage>
        <taxon>Bacteria</taxon>
        <taxon>Pseudomonadati</taxon>
        <taxon>Pseudomonadota</taxon>
        <taxon>Gammaproteobacteria</taxon>
        <taxon>Lysobacterales</taxon>
        <taxon>Lysobacteraceae</taxon>
        <taxon>Xylella</taxon>
    </lineage>
</organism>
<comment type="function">
    <text evidence="1">The beta subunit is responsible for the synthesis of L-tryptophan from indole and L-serine.</text>
</comment>
<comment type="catalytic activity">
    <reaction evidence="1">
        <text>(1S,2R)-1-C-(indol-3-yl)glycerol 3-phosphate + L-serine = D-glyceraldehyde 3-phosphate + L-tryptophan + H2O</text>
        <dbReference type="Rhea" id="RHEA:10532"/>
        <dbReference type="ChEBI" id="CHEBI:15377"/>
        <dbReference type="ChEBI" id="CHEBI:33384"/>
        <dbReference type="ChEBI" id="CHEBI:57912"/>
        <dbReference type="ChEBI" id="CHEBI:58866"/>
        <dbReference type="ChEBI" id="CHEBI:59776"/>
        <dbReference type="EC" id="4.2.1.20"/>
    </reaction>
</comment>
<comment type="cofactor">
    <cofactor evidence="1">
        <name>pyridoxal 5'-phosphate</name>
        <dbReference type="ChEBI" id="CHEBI:597326"/>
    </cofactor>
</comment>
<comment type="pathway">
    <text evidence="1">Amino-acid biosynthesis; L-tryptophan biosynthesis; L-tryptophan from chorismate: step 5/5.</text>
</comment>
<comment type="subunit">
    <text evidence="1">Tetramer of two alpha and two beta chains.</text>
</comment>
<comment type="similarity">
    <text evidence="1">Belongs to the TrpB family.</text>
</comment>
<gene>
    <name evidence="1" type="primary">trpB</name>
    <name type="ordered locus">Xfasm12_0728</name>
</gene>
<reference key="1">
    <citation type="journal article" date="2010" name="J. Bacteriol.">
        <title>Whole genome sequences of two Xylella fastidiosa strains (M12 and M23) causing almond leaf scorch disease in California.</title>
        <authorList>
            <person name="Chen J."/>
            <person name="Xie G."/>
            <person name="Han S."/>
            <person name="Chertkov O."/>
            <person name="Sims D."/>
            <person name="Civerolo E.L."/>
        </authorList>
    </citation>
    <scope>NUCLEOTIDE SEQUENCE [LARGE SCALE GENOMIC DNA]</scope>
    <source>
        <strain>M12</strain>
    </source>
</reference>
<accession>B0U6K6</accession>
<protein>
    <recommendedName>
        <fullName evidence="1">Tryptophan synthase beta chain</fullName>
        <ecNumber evidence="1">4.2.1.20</ecNumber>
    </recommendedName>
</protein>
<evidence type="ECO:0000255" key="1">
    <source>
        <dbReference type="HAMAP-Rule" id="MF_00133"/>
    </source>
</evidence>
<dbReference type="EC" id="4.2.1.20" evidence="1"/>
<dbReference type="EMBL" id="CP000941">
    <property type="protein sequence ID" value="ACA11722.1"/>
    <property type="molecule type" value="Genomic_DNA"/>
</dbReference>
<dbReference type="RefSeq" id="WP_004083824.1">
    <property type="nucleotide sequence ID" value="NC_010513.1"/>
</dbReference>
<dbReference type="SMR" id="B0U6K6"/>
<dbReference type="KEGG" id="xfm:Xfasm12_0728"/>
<dbReference type="HOGENOM" id="CLU_016734_3_1_6"/>
<dbReference type="UniPathway" id="UPA00035">
    <property type="reaction ID" value="UER00044"/>
</dbReference>
<dbReference type="GO" id="GO:0005737">
    <property type="term" value="C:cytoplasm"/>
    <property type="evidence" value="ECO:0007669"/>
    <property type="project" value="TreeGrafter"/>
</dbReference>
<dbReference type="GO" id="GO:0004834">
    <property type="term" value="F:tryptophan synthase activity"/>
    <property type="evidence" value="ECO:0007669"/>
    <property type="project" value="UniProtKB-UniRule"/>
</dbReference>
<dbReference type="CDD" id="cd06446">
    <property type="entry name" value="Trp-synth_B"/>
    <property type="match status" value="1"/>
</dbReference>
<dbReference type="FunFam" id="3.40.50.1100:FF:000001">
    <property type="entry name" value="Tryptophan synthase beta chain"/>
    <property type="match status" value="1"/>
</dbReference>
<dbReference type="FunFam" id="3.40.50.1100:FF:000004">
    <property type="entry name" value="Tryptophan synthase beta chain"/>
    <property type="match status" value="1"/>
</dbReference>
<dbReference type="Gene3D" id="3.40.50.1100">
    <property type="match status" value="2"/>
</dbReference>
<dbReference type="HAMAP" id="MF_00133">
    <property type="entry name" value="Trp_synth_beta"/>
    <property type="match status" value="1"/>
</dbReference>
<dbReference type="InterPro" id="IPR006653">
    <property type="entry name" value="Trp_synth_b_CS"/>
</dbReference>
<dbReference type="InterPro" id="IPR006654">
    <property type="entry name" value="Trp_synth_beta"/>
</dbReference>
<dbReference type="InterPro" id="IPR023026">
    <property type="entry name" value="Trp_synth_beta/beta-like"/>
</dbReference>
<dbReference type="InterPro" id="IPR001926">
    <property type="entry name" value="TrpB-like_PALP"/>
</dbReference>
<dbReference type="InterPro" id="IPR036052">
    <property type="entry name" value="TrpB-like_PALP_sf"/>
</dbReference>
<dbReference type="NCBIfam" id="TIGR00263">
    <property type="entry name" value="trpB"/>
    <property type="match status" value="1"/>
</dbReference>
<dbReference type="PANTHER" id="PTHR48077:SF3">
    <property type="entry name" value="TRYPTOPHAN SYNTHASE"/>
    <property type="match status" value="1"/>
</dbReference>
<dbReference type="PANTHER" id="PTHR48077">
    <property type="entry name" value="TRYPTOPHAN SYNTHASE-RELATED"/>
    <property type="match status" value="1"/>
</dbReference>
<dbReference type="Pfam" id="PF00291">
    <property type="entry name" value="PALP"/>
    <property type="match status" value="1"/>
</dbReference>
<dbReference type="PIRSF" id="PIRSF001413">
    <property type="entry name" value="Trp_syn_beta"/>
    <property type="match status" value="1"/>
</dbReference>
<dbReference type="SUPFAM" id="SSF53686">
    <property type="entry name" value="Tryptophan synthase beta subunit-like PLP-dependent enzymes"/>
    <property type="match status" value="1"/>
</dbReference>
<dbReference type="PROSITE" id="PS00168">
    <property type="entry name" value="TRP_SYNTHASE_BETA"/>
    <property type="match status" value="1"/>
</dbReference>
<feature type="chain" id="PRO_1000095840" description="Tryptophan synthase beta chain">
    <location>
        <begin position="1"/>
        <end position="405"/>
    </location>
</feature>
<feature type="modified residue" description="N6-(pyridoxal phosphate)lysine" evidence="1">
    <location>
        <position position="98"/>
    </location>
</feature>
<proteinExistence type="inferred from homology"/>